<sequence length="322" mass="35800">MDNFLALTLTGKKPVITEREINGVRWRWLGDGVLELTPLTPPQGALVISAGIHGNETAPVEMLDALLGAISHGEIPLRWRLLVILGNPPALKQGKRYCHSDMNRMFGGRWQLFAESGETCRARELEQCLEDFYDQGKESVRWHLDLHTAIRGSLHPQFGVLPQRDIPWDEKFLTWLGAAGLEALVFHQEPGGTFTHFSARHFGALACTLELGKALPFGQNDLRQFAVTASAIAALLSGESVGIVRTPPLRYRVVSQITRHSPSFEMHMASDTLNFMPFEKGTLLAQDGEERFTVTHDVEYVLFPNPLVALGLRAGLMLEKIS</sequence>
<gene>
    <name evidence="1" type="primary">astE</name>
    <name type="ordered locus">ECDH10B_1882</name>
</gene>
<organism>
    <name type="scientific">Escherichia coli (strain K12 / DH10B)</name>
    <dbReference type="NCBI Taxonomy" id="316385"/>
    <lineage>
        <taxon>Bacteria</taxon>
        <taxon>Pseudomonadati</taxon>
        <taxon>Pseudomonadota</taxon>
        <taxon>Gammaproteobacteria</taxon>
        <taxon>Enterobacterales</taxon>
        <taxon>Enterobacteriaceae</taxon>
        <taxon>Escherichia</taxon>
    </lineage>
</organism>
<feature type="chain" id="PRO_1000133630" description="Succinylglutamate desuccinylase">
    <location>
        <begin position="1"/>
        <end position="322"/>
    </location>
</feature>
<feature type="active site" evidence="1">
    <location>
        <position position="210"/>
    </location>
</feature>
<feature type="binding site" evidence="1">
    <location>
        <position position="53"/>
    </location>
    <ligand>
        <name>Zn(2+)</name>
        <dbReference type="ChEBI" id="CHEBI:29105"/>
    </ligand>
</feature>
<feature type="binding site" evidence="1">
    <location>
        <position position="56"/>
    </location>
    <ligand>
        <name>Zn(2+)</name>
        <dbReference type="ChEBI" id="CHEBI:29105"/>
    </ligand>
</feature>
<feature type="binding site" evidence="1">
    <location>
        <position position="147"/>
    </location>
    <ligand>
        <name>Zn(2+)</name>
        <dbReference type="ChEBI" id="CHEBI:29105"/>
    </ligand>
</feature>
<evidence type="ECO:0000255" key="1">
    <source>
        <dbReference type="HAMAP-Rule" id="MF_00767"/>
    </source>
</evidence>
<protein>
    <recommendedName>
        <fullName evidence="1">Succinylglutamate desuccinylase</fullName>
        <ecNumber evidence="1">3.5.1.96</ecNumber>
    </recommendedName>
</protein>
<proteinExistence type="inferred from homology"/>
<accession>B1XGK5</accession>
<dbReference type="EC" id="3.5.1.96" evidence="1"/>
<dbReference type="EMBL" id="CP000948">
    <property type="protein sequence ID" value="ACB02943.1"/>
    <property type="molecule type" value="Genomic_DNA"/>
</dbReference>
<dbReference type="RefSeq" id="WP_000368506.1">
    <property type="nucleotide sequence ID" value="NC_010473.1"/>
</dbReference>
<dbReference type="SMR" id="B1XGK5"/>
<dbReference type="KEGG" id="ecd:ECDH10B_1882"/>
<dbReference type="HOGENOM" id="CLU_071608_0_0_6"/>
<dbReference type="UniPathway" id="UPA00185">
    <property type="reaction ID" value="UER00283"/>
</dbReference>
<dbReference type="GO" id="GO:0016788">
    <property type="term" value="F:hydrolase activity, acting on ester bonds"/>
    <property type="evidence" value="ECO:0007669"/>
    <property type="project" value="UniProtKB-UniRule"/>
</dbReference>
<dbReference type="GO" id="GO:0009017">
    <property type="term" value="F:succinylglutamate desuccinylase activity"/>
    <property type="evidence" value="ECO:0007669"/>
    <property type="project" value="UniProtKB-EC"/>
</dbReference>
<dbReference type="GO" id="GO:0008270">
    <property type="term" value="F:zinc ion binding"/>
    <property type="evidence" value="ECO:0007669"/>
    <property type="project" value="UniProtKB-UniRule"/>
</dbReference>
<dbReference type="GO" id="GO:0019544">
    <property type="term" value="P:arginine catabolic process to glutamate"/>
    <property type="evidence" value="ECO:0007669"/>
    <property type="project" value="UniProtKB-UniRule"/>
</dbReference>
<dbReference type="GO" id="GO:0019545">
    <property type="term" value="P:arginine catabolic process to succinate"/>
    <property type="evidence" value="ECO:0007669"/>
    <property type="project" value="UniProtKB-UniRule"/>
</dbReference>
<dbReference type="CDD" id="cd03855">
    <property type="entry name" value="M14_ASTE"/>
    <property type="match status" value="1"/>
</dbReference>
<dbReference type="FunFam" id="3.40.630.10:FF:000017">
    <property type="entry name" value="Succinylglutamate desuccinylase"/>
    <property type="match status" value="1"/>
</dbReference>
<dbReference type="Gene3D" id="3.40.630.10">
    <property type="entry name" value="Zn peptidases"/>
    <property type="match status" value="1"/>
</dbReference>
<dbReference type="HAMAP" id="MF_00767">
    <property type="entry name" value="Arg_catab_AstE"/>
    <property type="match status" value="1"/>
</dbReference>
<dbReference type="InterPro" id="IPR050178">
    <property type="entry name" value="AspA/AstE_fam"/>
</dbReference>
<dbReference type="InterPro" id="IPR055438">
    <property type="entry name" value="AstE_AspA_cat"/>
</dbReference>
<dbReference type="InterPro" id="IPR007036">
    <property type="entry name" value="Aste_AspA_hybrid_dom"/>
</dbReference>
<dbReference type="InterPro" id="IPR016681">
    <property type="entry name" value="SuccinylGlu_desuccinylase"/>
</dbReference>
<dbReference type="NCBIfam" id="TIGR03242">
    <property type="entry name" value="arg_catab_astE"/>
    <property type="match status" value="1"/>
</dbReference>
<dbReference type="NCBIfam" id="NF003706">
    <property type="entry name" value="PRK05324.1"/>
    <property type="match status" value="1"/>
</dbReference>
<dbReference type="PANTHER" id="PTHR15162">
    <property type="entry name" value="ASPARTOACYLASE"/>
    <property type="match status" value="1"/>
</dbReference>
<dbReference type="PANTHER" id="PTHR15162:SF7">
    <property type="entry name" value="SUCCINYLGLUTAMATE DESUCCINYLASE"/>
    <property type="match status" value="1"/>
</dbReference>
<dbReference type="Pfam" id="PF24827">
    <property type="entry name" value="AstE_AspA_cat"/>
    <property type="match status" value="1"/>
</dbReference>
<dbReference type="Pfam" id="PF04952">
    <property type="entry name" value="AstE_AspA_hybrid"/>
    <property type="match status" value="1"/>
</dbReference>
<dbReference type="PIRSF" id="PIRSF017020">
    <property type="entry name" value="AstE"/>
    <property type="match status" value="1"/>
</dbReference>
<dbReference type="SUPFAM" id="SSF53187">
    <property type="entry name" value="Zn-dependent exopeptidases"/>
    <property type="match status" value="1"/>
</dbReference>
<comment type="function">
    <text evidence="1">Transforms N(2)-succinylglutamate into succinate and glutamate.</text>
</comment>
<comment type="catalytic activity">
    <reaction evidence="1">
        <text>N-succinyl-L-glutamate + H2O = L-glutamate + succinate</text>
        <dbReference type="Rhea" id="RHEA:15169"/>
        <dbReference type="ChEBI" id="CHEBI:15377"/>
        <dbReference type="ChEBI" id="CHEBI:29985"/>
        <dbReference type="ChEBI" id="CHEBI:30031"/>
        <dbReference type="ChEBI" id="CHEBI:58763"/>
        <dbReference type="EC" id="3.5.1.96"/>
    </reaction>
</comment>
<comment type="cofactor">
    <cofactor evidence="1">
        <name>Zn(2+)</name>
        <dbReference type="ChEBI" id="CHEBI:29105"/>
    </cofactor>
    <text evidence="1">Binds 1 zinc ion per subunit.</text>
</comment>
<comment type="pathway">
    <text evidence="1">Amino-acid degradation; L-arginine degradation via AST pathway; L-glutamate and succinate from L-arginine: step 5/5.</text>
</comment>
<comment type="similarity">
    <text evidence="1">Belongs to the AspA/AstE family. Succinylglutamate desuccinylase subfamily.</text>
</comment>
<reference key="1">
    <citation type="journal article" date="2008" name="J. Bacteriol.">
        <title>The complete genome sequence of Escherichia coli DH10B: insights into the biology of a laboratory workhorse.</title>
        <authorList>
            <person name="Durfee T."/>
            <person name="Nelson R."/>
            <person name="Baldwin S."/>
            <person name="Plunkett G. III"/>
            <person name="Burland V."/>
            <person name="Mau B."/>
            <person name="Petrosino J.F."/>
            <person name="Qin X."/>
            <person name="Muzny D.M."/>
            <person name="Ayele M."/>
            <person name="Gibbs R.A."/>
            <person name="Csorgo B."/>
            <person name="Posfai G."/>
            <person name="Weinstock G.M."/>
            <person name="Blattner F.R."/>
        </authorList>
    </citation>
    <scope>NUCLEOTIDE SEQUENCE [LARGE SCALE GENOMIC DNA]</scope>
    <source>
        <strain>K12 / DH10B</strain>
    </source>
</reference>
<name>ASTE_ECODH</name>
<keyword id="KW-0056">Arginine metabolism</keyword>
<keyword id="KW-0378">Hydrolase</keyword>
<keyword id="KW-0479">Metal-binding</keyword>
<keyword id="KW-0862">Zinc</keyword>